<gene>
    <name evidence="1" type="primary">pyrR</name>
    <name type="ordered locus">GK1147</name>
</gene>
<feature type="chain" id="PRO_1000053835" description="Bifunctional protein PyrR">
    <location>
        <begin position="1"/>
        <end position="179"/>
    </location>
</feature>
<feature type="short sequence motif" description="PRPP-binding" evidence="1">
    <location>
        <begin position="100"/>
        <end position="112"/>
    </location>
</feature>
<dbReference type="EC" id="2.4.2.9" evidence="1"/>
<dbReference type="EMBL" id="BA000043">
    <property type="protein sequence ID" value="BAD75432.1"/>
    <property type="molecule type" value="Genomic_DNA"/>
</dbReference>
<dbReference type="RefSeq" id="WP_011230647.1">
    <property type="nucleotide sequence ID" value="NC_006510.1"/>
</dbReference>
<dbReference type="SMR" id="Q5L0U8"/>
<dbReference type="STRING" id="235909.GK1147"/>
<dbReference type="GeneID" id="32063043"/>
<dbReference type="KEGG" id="gka:GK1147"/>
<dbReference type="eggNOG" id="COG2065">
    <property type="taxonomic scope" value="Bacteria"/>
</dbReference>
<dbReference type="HOGENOM" id="CLU_094234_2_1_9"/>
<dbReference type="Proteomes" id="UP000001172">
    <property type="component" value="Chromosome"/>
</dbReference>
<dbReference type="GO" id="GO:0003723">
    <property type="term" value="F:RNA binding"/>
    <property type="evidence" value="ECO:0007669"/>
    <property type="project" value="UniProtKB-UniRule"/>
</dbReference>
<dbReference type="GO" id="GO:0004845">
    <property type="term" value="F:uracil phosphoribosyltransferase activity"/>
    <property type="evidence" value="ECO:0007669"/>
    <property type="project" value="UniProtKB-UniRule"/>
</dbReference>
<dbReference type="GO" id="GO:0006353">
    <property type="term" value="P:DNA-templated transcription termination"/>
    <property type="evidence" value="ECO:0007669"/>
    <property type="project" value="UniProtKB-UniRule"/>
</dbReference>
<dbReference type="CDD" id="cd06223">
    <property type="entry name" value="PRTases_typeI"/>
    <property type="match status" value="1"/>
</dbReference>
<dbReference type="FunFam" id="3.40.50.2020:FF:000020">
    <property type="entry name" value="Bifunctional protein PyrR"/>
    <property type="match status" value="1"/>
</dbReference>
<dbReference type="Gene3D" id="3.40.50.2020">
    <property type="match status" value="1"/>
</dbReference>
<dbReference type="HAMAP" id="MF_01219">
    <property type="entry name" value="PyrR"/>
    <property type="match status" value="1"/>
</dbReference>
<dbReference type="InterPro" id="IPR000836">
    <property type="entry name" value="PRibTrfase_dom"/>
</dbReference>
<dbReference type="InterPro" id="IPR029057">
    <property type="entry name" value="PRTase-like"/>
</dbReference>
<dbReference type="InterPro" id="IPR023050">
    <property type="entry name" value="PyrR"/>
</dbReference>
<dbReference type="InterPro" id="IPR050137">
    <property type="entry name" value="PyrR_bifunctional"/>
</dbReference>
<dbReference type="NCBIfam" id="NF003545">
    <property type="entry name" value="PRK05205.1-1"/>
    <property type="match status" value="1"/>
</dbReference>
<dbReference type="NCBIfam" id="NF003547">
    <property type="entry name" value="PRK05205.1-3"/>
    <property type="match status" value="1"/>
</dbReference>
<dbReference type="NCBIfam" id="NF003548">
    <property type="entry name" value="PRK05205.1-4"/>
    <property type="match status" value="1"/>
</dbReference>
<dbReference type="NCBIfam" id="NF003549">
    <property type="entry name" value="PRK05205.1-5"/>
    <property type="match status" value="1"/>
</dbReference>
<dbReference type="PANTHER" id="PTHR11608">
    <property type="entry name" value="BIFUNCTIONAL PROTEIN PYRR"/>
    <property type="match status" value="1"/>
</dbReference>
<dbReference type="PANTHER" id="PTHR11608:SF0">
    <property type="entry name" value="BIFUNCTIONAL PROTEIN PYRR"/>
    <property type="match status" value="1"/>
</dbReference>
<dbReference type="Pfam" id="PF00156">
    <property type="entry name" value="Pribosyltran"/>
    <property type="match status" value="1"/>
</dbReference>
<dbReference type="SUPFAM" id="SSF53271">
    <property type="entry name" value="PRTase-like"/>
    <property type="match status" value="1"/>
</dbReference>
<accession>Q5L0U8</accession>
<proteinExistence type="inferred from homology"/>
<sequence>MQKAVVMDEQAIRRALTRIAHEIIERNKGIDGCVLVGIKTRGIYLARRLAERIEQIEGASVPVGELDITLYRDDLTVKTDDHEPLVKGTNVPFPVTERNVILVDDVLFTGRTVRAAMDAVMDLGRPARIQLAVLVDRGHRELPIRADFVGKNVPTSRSELIVVELSEVDGIDQVSIHEK</sequence>
<keyword id="KW-0328">Glycosyltransferase</keyword>
<keyword id="KW-1185">Reference proteome</keyword>
<keyword id="KW-0694">RNA-binding</keyword>
<keyword id="KW-0804">Transcription</keyword>
<keyword id="KW-0805">Transcription regulation</keyword>
<keyword id="KW-0806">Transcription termination</keyword>
<keyword id="KW-0808">Transferase</keyword>
<organism>
    <name type="scientific">Geobacillus kaustophilus (strain HTA426)</name>
    <dbReference type="NCBI Taxonomy" id="235909"/>
    <lineage>
        <taxon>Bacteria</taxon>
        <taxon>Bacillati</taxon>
        <taxon>Bacillota</taxon>
        <taxon>Bacilli</taxon>
        <taxon>Bacillales</taxon>
        <taxon>Anoxybacillaceae</taxon>
        <taxon>Geobacillus</taxon>
        <taxon>Geobacillus thermoleovorans group</taxon>
    </lineage>
</organism>
<comment type="function">
    <text evidence="1">Regulates transcriptional attenuation of the pyrimidine nucleotide (pyr) operon by binding in a uridine-dependent manner to specific sites on pyr mRNA. This disrupts an antiterminator hairpin in the RNA and favors formation of a downstream transcription terminator, leading to a reduced expression of downstream genes.</text>
</comment>
<comment type="function">
    <text evidence="1">Also displays a weak uracil phosphoribosyltransferase activity which is not physiologically significant.</text>
</comment>
<comment type="catalytic activity">
    <reaction evidence="1">
        <text>UMP + diphosphate = 5-phospho-alpha-D-ribose 1-diphosphate + uracil</text>
        <dbReference type="Rhea" id="RHEA:13017"/>
        <dbReference type="ChEBI" id="CHEBI:17568"/>
        <dbReference type="ChEBI" id="CHEBI:33019"/>
        <dbReference type="ChEBI" id="CHEBI:57865"/>
        <dbReference type="ChEBI" id="CHEBI:58017"/>
        <dbReference type="EC" id="2.4.2.9"/>
    </reaction>
</comment>
<comment type="subunit">
    <text evidence="1">Homodimer and homohexamer; in equilibrium.</text>
</comment>
<comment type="similarity">
    <text evidence="1">Belongs to the purine/pyrimidine phosphoribosyltransferase family. PyrR subfamily.</text>
</comment>
<protein>
    <recommendedName>
        <fullName evidence="1">Bifunctional protein PyrR</fullName>
    </recommendedName>
    <domain>
        <recommendedName>
            <fullName evidence="1">Pyrimidine operon regulatory protein</fullName>
        </recommendedName>
    </domain>
    <domain>
        <recommendedName>
            <fullName evidence="1">Uracil phosphoribosyltransferase</fullName>
            <shortName evidence="1">UPRTase</shortName>
            <ecNumber evidence="1">2.4.2.9</ecNumber>
        </recommendedName>
    </domain>
</protein>
<reference key="1">
    <citation type="journal article" date="2004" name="Nucleic Acids Res.">
        <title>Thermoadaptation trait revealed by the genome sequence of thermophilic Geobacillus kaustophilus.</title>
        <authorList>
            <person name="Takami H."/>
            <person name="Takaki Y."/>
            <person name="Chee G.-J."/>
            <person name="Nishi S."/>
            <person name="Shimamura S."/>
            <person name="Suzuki H."/>
            <person name="Matsui S."/>
            <person name="Uchiyama I."/>
        </authorList>
    </citation>
    <scope>NUCLEOTIDE SEQUENCE [LARGE SCALE GENOMIC DNA]</scope>
    <source>
        <strain>HTA426</strain>
    </source>
</reference>
<name>PYRR_GEOKA</name>
<evidence type="ECO:0000255" key="1">
    <source>
        <dbReference type="HAMAP-Rule" id="MF_01219"/>
    </source>
</evidence>